<proteinExistence type="inferred from homology"/>
<dbReference type="EC" id="6.1.1.10" evidence="1"/>
<dbReference type="EMBL" id="CP000821">
    <property type="protein sequence ID" value="ABV37260.1"/>
    <property type="molecule type" value="Genomic_DNA"/>
</dbReference>
<dbReference type="RefSeq" id="WP_012142991.1">
    <property type="nucleotide sequence ID" value="NC_009831.1"/>
</dbReference>
<dbReference type="SMR" id="A8FWN7"/>
<dbReference type="STRING" id="425104.Ssed_2653"/>
<dbReference type="KEGG" id="sse:Ssed_2653"/>
<dbReference type="eggNOG" id="COG0073">
    <property type="taxonomic scope" value="Bacteria"/>
</dbReference>
<dbReference type="eggNOG" id="COG0143">
    <property type="taxonomic scope" value="Bacteria"/>
</dbReference>
<dbReference type="HOGENOM" id="CLU_009710_7_0_6"/>
<dbReference type="OrthoDB" id="9810191at2"/>
<dbReference type="Proteomes" id="UP000002015">
    <property type="component" value="Chromosome"/>
</dbReference>
<dbReference type="GO" id="GO:0005829">
    <property type="term" value="C:cytosol"/>
    <property type="evidence" value="ECO:0007669"/>
    <property type="project" value="TreeGrafter"/>
</dbReference>
<dbReference type="GO" id="GO:0005524">
    <property type="term" value="F:ATP binding"/>
    <property type="evidence" value="ECO:0007669"/>
    <property type="project" value="UniProtKB-UniRule"/>
</dbReference>
<dbReference type="GO" id="GO:0046872">
    <property type="term" value="F:metal ion binding"/>
    <property type="evidence" value="ECO:0007669"/>
    <property type="project" value="UniProtKB-KW"/>
</dbReference>
<dbReference type="GO" id="GO:0004825">
    <property type="term" value="F:methionine-tRNA ligase activity"/>
    <property type="evidence" value="ECO:0007669"/>
    <property type="project" value="UniProtKB-UniRule"/>
</dbReference>
<dbReference type="GO" id="GO:0000049">
    <property type="term" value="F:tRNA binding"/>
    <property type="evidence" value="ECO:0007669"/>
    <property type="project" value="UniProtKB-KW"/>
</dbReference>
<dbReference type="GO" id="GO:0006431">
    <property type="term" value="P:methionyl-tRNA aminoacylation"/>
    <property type="evidence" value="ECO:0007669"/>
    <property type="project" value="UniProtKB-UniRule"/>
</dbReference>
<dbReference type="CDD" id="cd07957">
    <property type="entry name" value="Anticodon_Ia_Met"/>
    <property type="match status" value="1"/>
</dbReference>
<dbReference type="CDD" id="cd00814">
    <property type="entry name" value="MetRS_core"/>
    <property type="match status" value="1"/>
</dbReference>
<dbReference type="CDD" id="cd02800">
    <property type="entry name" value="tRNA_bind_EcMetRS_like"/>
    <property type="match status" value="1"/>
</dbReference>
<dbReference type="FunFam" id="1.10.730.10:FF:000005">
    <property type="entry name" value="Methionine--tRNA ligase"/>
    <property type="match status" value="1"/>
</dbReference>
<dbReference type="FunFam" id="2.20.28.20:FF:000001">
    <property type="entry name" value="Methionine--tRNA ligase"/>
    <property type="match status" value="1"/>
</dbReference>
<dbReference type="FunFam" id="2.40.50.140:FF:000042">
    <property type="entry name" value="Methionine--tRNA ligase"/>
    <property type="match status" value="1"/>
</dbReference>
<dbReference type="Gene3D" id="3.40.50.620">
    <property type="entry name" value="HUPs"/>
    <property type="match status" value="1"/>
</dbReference>
<dbReference type="Gene3D" id="1.10.730.10">
    <property type="entry name" value="Isoleucyl-tRNA Synthetase, Domain 1"/>
    <property type="match status" value="1"/>
</dbReference>
<dbReference type="Gene3D" id="2.20.28.20">
    <property type="entry name" value="Methionyl-tRNA synthetase, Zn-domain"/>
    <property type="match status" value="1"/>
</dbReference>
<dbReference type="Gene3D" id="2.40.50.140">
    <property type="entry name" value="Nucleic acid-binding proteins"/>
    <property type="match status" value="1"/>
</dbReference>
<dbReference type="HAMAP" id="MF_00098">
    <property type="entry name" value="Met_tRNA_synth_type1"/>
    <property type="match status" value="1"/>
</dbReference>
<dbReference type="InterPro" id="IPR001412">
    <property type="entry name" value="aa-tRNA-synth_I_CS"/>
</dbReference>
<dbReference type="InterPro" id="IPR041872">
    <property type="entry name" value="Anticodon_Met"/>
</dbReference>
<dbReference type="InterPro" id="IPR004495">
    <property type="entry name" value="Met-tRNA-synth_bsu_C"/>
</dbReference>
<dbReference type="InterPro" id="IPR023458">
    <property type="entry name" value="Met-tRNA_ligase_1"/>
</dbReference>
<dbReference type="InterPro" id="IPR014758">
    <property type="entry name" value="Met-tRNA_synth"/>
</dbReference>
<dbReference type="InterPro" id="IPR015413">
    <property type="entry name" value="Methionyl/Leucyl_tRNA_Synth"/>
</dbReference>
<dbReference type="InterPro" id="IPR033911">
    <property type="entry name" value="MetRS_core"/>
</dbReference>
<dbReference type="InterPro" id="IPR029038">
    <property type="entry name" value="MetRS_Zn"/>
</dbReference>
<dbReference type="InterPro" id="IPR012340">
    <property type="entry name" value="NA-bd_OB-fold"/>
</dbReference>
<dbReference type="InterPro" id="IPR014729">
    <property type="entry name" value="Rossmann-like_a/b/a_fold"/>
</dbReference>
<dbReference type="InterPro" id="IPR002547">
    <property type="entry name" value="tRNA-bd_dom"/>
</dbReference>
<dbReference type="InterPro" id="IPR009080">
    <property type="entry name" value="tRNAsynth_Ia_anticodon-bd"/>
</dbReference>
<dbReference type="NCBIfam" id="TIGR00398">
    <property type="entry name" value="metG"/>
    <property type="match status" value="1"/>
</dbReference>
<dbReference type="NCBIfam" id="TIGR00399">
    <property type="entry name" value="metG_C_term"/>
    <property type="match status" value="1"/>
</dbReference>
<dbReference type="NCBIfam" id="NF001100">
    <property type="entry name" value="PRK00133.1"/>
    <property type="match status" value="1"/>
</dbReference>
<dbReference type="PANTHER" id="PTHR45765">
    <property type="entry name" value="METHIONINE--TRNA LIGASE"/>
    <property type="match status" value="1"/>
</dbReference>
<dbReference type="PANTHER" id="PTHR45765:SF1">
    <property type="entry name" value="METHIONINE--TRNA LIGASE, CYTOPLASMIC"/>
    <property type="match status" value="1"/>
</dbReference>
<dbReference type="Pfam" id="PF19303">
    <property type="entry name" value="Anticodon_3"/>
    <property type="match status" value="1"/>
</dbReference>
<dbReference type="Pfam" id="PF09334">
    <property type="entry name" value="tRNA-synt_1g"/>
    <property type="match status" value="1"/>
</dbReference>
<dbReference type="Pfam" id="PF01588">
    <property type="entry name" value="tRNA_bind"/>
    <property type="match status" value="1"/>
</dbReference>
<dbReference type="PRINTS" id="PR01041">
    <property type="entry name" value="TRNASYNTHMET"/>
</dbReference>
<dbReference type="SUPFAM" id="SSF47323">
    <property type="entry name" value="Anticodon-binding domain of a subclass of class I aminoacyl-tRNA synthetases"/>
    <property type="match status" value="1"/>
</dbReference>
<dbReference type="SUPFAM" id="SSF57770">
    <property type="entry name" value="Methionyl-tRNA synthetase (MetRS), Zn-domain"/>
    <property type="match status" value="1"/>
</dbReference>
<dbReference type="SUPFAM" id="SSF50249">
    <property type="entry name" value="Nucleic acid-binding proteins"/>
    <property type="match status" value="1"/>
</dbReference>
<dbReference type="SUPFAM" id="SSF52374">
    <property type="entry name" value="Nucleotidylyl transferase"/>
    <property type="match status" value="1"/>
</dbReference>
<dbReference type="PROSITE" id="PS00178">
    <property type="entry name" value="AA_TRNA_LIGASE_I"/>
    <property type="match status" value="1"/>
</dbReference>
<dbReference type="PROSITE" id="PS50886">
    <property type="entry name" value="TRBD"/>
    <property type="match status" value="1"/>
</dbReference>
<reference key="1">
    <citation type="submission" date="2007-08" db="EMBL/GenBank/DDBJ databases">
        <title>Complete sequence of Shewanella sediminis HAW-EB3.</title>
        <authorList>
            <consortium name="US DOE Joint Genome Institute"/>
            <person name="Copeland A."/>
            <person name="Lucas S."/>
            <person name="Lapidus A."/>
            <person name="Barry K."/>
            <person name="Glavina del Rio T."/>
            <person name="Dalin E."/>
            <person name="Tice H."/>
            <person name="Pitluck S."/>
            <person name="Chertkov O."/>
            <person name="Brettin T."/>
            <person name="Bruce D."/>
            <person name="Detter J.C."/>
            <person name="Han C."/>
            <person name="Schmutz J."/>
            <person name="Larimer F."/>
            <person name="Land M."/>
            <person name="Hauser L."/>
            <person name="Kyrpides N."/>
            <person name="Kim E."/>
            <person name="Zhao J.-S."/>
            <person name="Richardson P."/>
        </authorList>
    </citation>
    <scope>NUCLEOTIDE SEQUENCE [LARGE SCALE GENOMIC DNA]</scope>
    <source>
        <strain>HAW-EB3</strain>
    </source>
</reference>
<name>SYM_SHESH</name>
<gene>
    <name evidence="1" type="primary">metG</name>
    <name type="ordered locus">Ssed_2653</name>
</gene>
<organism>
    <name type="scientific">Shewanella sediminis (strain HAW-EB3)</name>
    <dbReference type="NCBI Taxonomy" id="425104"/>
    <lineage>
        <taxon>Bacteria</taxon>
        <taxon>Pseudomonadati</taxon>
        <taxon>Pseudomonadota</taxon>
        <taxon>Gammaproteobacteria</taxon>
        <taxon>Alteromonadales</taxon>
        <taxon>Shewanellaceae</taxon>
        <taxon>Shewanella</taxon>
    </lineage>
</organism>
<comment type="function">
    <text evidence="1">Is required not only for elongation of protein synthesis but also for the initiation of all mRNA translation through initiator tRNA(fMet) aminoacylation.</text>
</comment>
<comment type="catalytic activity">
    <reaction evidence="1">
        <text>tRNA(Met) + L-methionine + ATP = L-methionyl-tRNA(Met) + AMP + diphosphate</text>
        <dbReference type="Rhea" id="RHEA:13481"/>
        <dbReference type="Rhea" id="RHEA-COMP:9667"/>
        <dbReference type="Rhea" id="RHEA-COMP:9698"/>
        <dbReference type="ChEBI" id="CHEBI:30616"/>
        <dbReference type="ChEBI" id="CHEBI:33019"/>
        <dbReference type="ChEBI" id="CHEBI:57844"/>
        <dbReference type="ChEBI" id="CHEBI:78442"/>
        <dbReference type="ChEBI" id="CHEBI:78530"/>
        <dbReference type="ChEBI" id="CHEBI:456215"/>
        <dbReference type="EC" id="6.1.1.10"/>
    </reaction>
</comment>
<comment type="cofactor">
    <cofactor evidence="1">
        <name>Zn(2+)</name>
        <dbReference type="ChEBI" id="CHEBI:29105"/>
    </cofactor>
    <text evidence="1">Binds 1 zinc ion per subunit.</text>
</comment>
<comment type="subunit">
    <text evidence="1">Homodimer.</text>
</comment>
<comment type="subcellular location">
    <subcellularLocation>
        <location evidence="1">Cytoplasm</location>
    </subcellularLocation>
</comment>
<comment type="similarity">
    <text evidence="1">Belongs to the class-I aminoacyl-tRNA synthetase family. MetG type 1 subfamily.</text>
</comment>
<sequence length="692" mass="77944">MANSQRKILVTSALPYANGPIHLGHMLEYIQTDIWSRFQKLRGHECHYICADDAHGTPIMLKAQQLGIEPEEMIAQVNKEHQQDFADFNIKFDNFHSTHSVENRELSGEIYLKLRDAGFIKTRTISQLFDPEKSMFLPDRFVKGTCPKCKSEDQYGDNCDNCGATYNPTDLIDPKSAVSGATPVMKDSEHFFFDLPAFENMLSEWTRSGAIQDEIANKLAEWFEQGLQQWDISRDAPYFGFEIPDAPGKYFYVWLDAPIGYMGSFKNLCDRREDLNFDDFWSKDSTAEVYHFIGKDIVNFHSLFWPAMLEGAGYRKPTSVFAHGYVTVNGAKMSKSKGTFIKARTYLDNLDPEYLRYYYAAKLSNRIDDLDLNLEDFAQRVNSDLVGKLVNLASRTAGFISKRFDGKLAKIADTTLEETFLAKQEVIADLYENREFGKAMREIMALADIANAYVADAAPWQLIKDEAKQDEAHQVCSNALNLFRILVTYLKPVLPKLADDVEAFLQFPLTWDNLGADLAGHEIAKFKALMQRIDMKNIEAIIEASKDNLQATTEAAPEKKAKKSAETADVAVDTRSPLESDPISDEISFDDFAKLDLRIARIAKAEHVPEANKLLKLQLDLGGETKQVFAGIKSAYAPEDLEGKLTVMVANLAPRKMRFGMSEGMVLAAGPGNKDLWILEPHEGAQPGMRVK</sequence>
<accession>A8FWN7</accession>
<protein>
    <recommendedName>
        <fullName evidence="1">Methionine--tRNA ligase</fullName>
        <ecNumber evidence="1">6.1.1.10</ecNumber>
    </recommendedName>
    <alternativeName>
        <fullName evidence="1">Methionyl-tRNA synthetase</fullName>
        <shortName evidence="1">MetRS</shortName>
    </alternativeName>
</protein>
<feature type="chain" id="PRO_1000075590" description="Methionine--tRNA ligase">
    <location>
        <begin position="1"/>
        <end position="692"/>
    </location>
</feature>
<feature type="domain" description="tRNA-binding" evidence="1">
    <location>
        <begin position="591"/>
        <end position="692"/>
    </location>
</feature>
<feature type="region of interest" description="Disordered" evidence="2">
    <location>
        <begin position="552"/>
        <end position="577"/>
    </location>
</feature>
<feature type="short sequence motif" description="'HIGH' region">
    <location>
        <begin position="15"/>
        <end position="25"/>
    </location>
</feature>
<feature type="short sequence motif" description="'KMSKS' region">
    <location>
        <begin position="332"/>
        <end position="336"/>
    </location>
</feature>
<feature type="compositionally biased region" description="Basic and acidic residues" evidence="2">
    <location>
        <begin position="556"/>
        <end position="566"/>
    </location>
</feature>
<feature type="binding site" evidence="1">
    <location>
        <position position="146"/>
    </location>
    <ligand>
        <name>Zn(2+)</name>
        <dbReference type="ChEBI" id="CHEBI:29105"/>
    </ligand>
</feature>
<feature type="binding site" evidence="1">
    <location>
        <position position="149"/>
    </location>
    <ligand>
        <name>Zn(2+)</name>
        <dbReference type="ChEBI" id="CHEBI:29105"/>
    </ligand>
</feature>
<feature type="binding site" evidence="1">
    <location>
        <position position="159"/>
    </location>
    <ligand>
        <name>Zn(2+)</name>
        <dbReference type="ChEBI" id="CHEBI:29105"/>
    </ligand>
</feature>
<feature type="binding site" evidence="1">
    <location>
        <position position="162"/>
    </location>
    <ligand>
        <name>Zn(2+)</name>
        <dbReference type="ChEBI" id="CHEBI:29105"/>
    </ligand>
</feature>
<feature type="binding site" evidence="1">
    <location>
        <position position="335"/>
    </location>
    <ligand>
        <name>ATP</name>
        <dbReference type="ChEBI" id="CHEBI:30616"/>
    </ligand>
</feature>
<evidence type="ECO:0000255" key="1">
    <source>
        <dbReference type="HAMAP-Rule" id="MF_00098"/>
    </source>
</evidence>
<evidence type="ECO:0000256" key="2">
    <source>
        <dbReference type="SAM" id="MobiDB-lite"/>
    </source>
</evidence>
<keyword id="KW-0030">Aminoacyl-tRNA synthetase</keyword>
<keyword id="KW-0067">ATP-binding</keyword>
<keyword id="KW-0963">Cytoplasm</keyword>
<keyword id="KW-0436">Ligase</keyword>
<keyword id="KW-0479">Metal-binding</keyword>
<keyword id="KW-0547">Nucleotide-binding</keyword>
<keyword id="KW-0648">Protein biosynthesis</keyword>
<keyword id="KW-1185">Reference proteome</keyword>
<keyword id="KW-0694">RNA-binding</keyword>
<keyword id="KW-0820">tRNA-binding</keyword>
<keyword id="KW-0862">Zinc</keyword>